<comment type="function">
    <text evidence="1">Catalyzes the interconversion of 2-phosphoglycerate and 3-phosphoglycerate.</text>
</comment>
<comment type="catalytic activity">
    <reaction evidence="1">
        <text>(2R)-2-phosphoglycerate = (2R)-3-phosphoglycerate</text>
        <dbReference type="Rhea" id="RHEA:15901"/>
        <dbReference type="ChEBI" id="CHEBI:58272"/>
        <dbReference type="ChEBI" id="CHEBI:58289"/>
        <dbReference type="EC" id="5.4.2.11"/>
    </reaction>
</comment>
<comment type="pathway">
    <text evidence="1">Carbohydrate degradation; glycolysis; pyruvate from D-glyceraldehyde 3-phosphate: step 3/5.</text>
</comment>
<comment type="similarity">
    <text evidence="1">Belongs to the phosphoglycerate mutase family. BPG-dependent PGAM subfamily.</text>
</comment>
<keyword id="KW-0312">Gluconeogenesis</keyword>
<keyword id="KW-0324">Glycolysis</keyword>
<keyword id="KW-0413">Isomerase</keyword>
<feature type="chain" id="PRO_0000229147" description="2,3-bisphosphoglycerate-dependent phosphoglycerate mutase">
    <location>
        <begin position="1"/>
        <end position="247"/>
    </location>
</feature>
<feature type="active site" description="Tele-phosphohistidine intermediate" evidence="1">
    <location>
        <position position="9"/>
    </location>
</feature>
<feature type="active site" description="Proton donor/acceptor" evidence="1">
    <location>
        <position position="87"/>
    </location>
</feature>
<feature type="binding site" evidence="1">
    <location>
        <begin position="8"/>
        <end position="15"/>
    </location>
    <ligand>
        <name>substrate</name>
    </ligand>
</feature>
<feature type="binding site" evidence="1">
    <location>
        <begin position="21"/>
        <end position="22"/>
    </location>
    <ligand>
        <name>substrate</name>
    </ligand>
</feature>
<feature type="binding site" evidence="1">
    <location>
        <position position="60"/>
    </location>
    <ligand>
        <name>substrate</name>
    </ligand>
</feature>
<feature type="binding site" evidence="1">
    <location>
        <begin position="87"/>
        <end position="90"/>
    </location>
    <ligand>
        <name>substrate</name>
    </ligand>
</feature>
<feature type="binding site" evidence="1">
    <location>
        <position position="98"/>
    </location>
    <ligand>
        <name>substrate</name>
    </ligand>
</feature>
<feature type="binding site" evidence="1">
    <location>
        <begin position="114"/>
        <end position="115"/>
    </location>
    <ligand>
        <name>substrate</name>
    </ligand>
</feature>
<feature type="binding site" evidence="1">
    <location>
        <begin position="183"/>
        <end position="184"/>
    </location>
    <ligand>
        <name>substrate</name>
    </ligand>
</feature>
<feature type="site" description="Transition state stabilizer" evidence="1">
    <location>
        <position position="182"/>
    </location>
</feature>
<gene>
    <name evidence="1" type="primary">gpmA</name>
    <name type="ordered locus">Tfu_2911</name>
</gene>
<organism>
    <name type="scientific">Thermobifida fusca (strain YX)</name>
    <dbReference type="NCBI Taxonomy" id="269800"/>
    <lineage>
        <taxon>Bacteria</taxon>
        <taxon>Bacillati</taxon>
        <taxon>Actinomycetota</taxon>
        <taxon>Actinomycetes</taxon>
        <taxon>Streptosporangiales</taxon>
        <taxon>Nocardiopsidaceae</taxon>
        <taxon>Thermobifida</taxon>
    </lineage>
</organism>
<accession>Q47KS8</accession>
<name>GPMA_THEFY</name>
<dbReference type="EC" id="5.4.2.11" evidence="1"/>
<dbReference type="EMBL" id="CP000088">
    <property type="protein sequence ID" value="AAZ56944.1"/>
    <property type="molecule type" value="Genomic_DNA"/>
</dbReference>
<dbReference type="RefSeq" id="WP_011293334.1">
    <property type="nucleotide sequence ID" value="NC_007333.1"/>
</dbReference>
<dbReference type="SMR" id="Q47KS8"/>
<dbReference type="STRING" id="269800.Tfu_2911"/>
<dbReference type="KEGG" id="tfu:Tfu_2911"/>
<dbReference type="eggNOG" id="COG0588">
    <property type="taxonomic scope" value="Bacteria"/>
</dbReference>
<dbReference type="HOGENOM" id="CLU_033323_1_1_11"/>
<dbReference type="OrthoDB" id="9781415at2"/>
<dbReference type="UniPathway" id="UPA00109">
    <property type="reaction ID" value="UER00186"/>
</dbReference>
<dbReference type="GO" id="GO:0004619">
    <property type="term" value="F:phosphoglycerate mutase activity"/>
    <property type="evidence" value="ECO:0007669"/>
    <property type="project" value="UniProtKB-EC"/>
</dbReference>
<dbReference type="GO" id="GO:0006094">
    <property type="term" value="P:gluconeogenesis"/>
    <property type="evidence" value="ECO:0007669"/>
    <property type="project" value="UniProtKB-UniRule"/>
</dbReference>
<dbReference type="GO" id="GO:0006096">
    <property type="term" value="P:glycolytic process"/>
    <property type="evidence" value="ECO:0007669"/>
    <property type="project" value="UniProtKB-UniRule"/>
</dbReference>
<dbReference type="CDD" id="cd07067">
    <property type="entry name" value="HP_PGM_like"/>
    <property type="match status" value="1"/>
</dbReference>
<dbReference type="FunFam" id="3.40.50.1240:FF:000003">
    <property type="entry name" value="2,3-bisphosphoglycerate-dependent phosphoglycerate mutase"/>
    <property type="match status" value="1"/>
</dbReference>
<dbReference type="Gene3D" id="3.40.50.1240">
    <property type="entry name" value="Phosphoglycerate mutase-like"/>
    <property type="match status" value="1"/>
</dbReference>
<dbReference type="HAMAP" id="MF_01039">
    <property type="entry name" value="PGAM_GpmA"/>
    <property type="match status" value="1"/>
</dbReference>
<dbReference type="InterPro" id="IPR013078">
    <property type="entry name" value="His_Pase_superF_clade-1"/>
</dbReference>
<dbReference type="InterPro" id="IPR029033">
    <property type="entry name" value="His_PPase_superfam"/>
</dbReference>
<dbReference type="InterPro" id="IPR001345">
    <property type="entry name" value="PG/BPGM_mutase_AS"/>
</dbReference>
<dbReference type="InterPro" id="IPR005952">
    <property type="entry name" value="Phosphogly_mut1"/>
</dbReference>
<dbReference type="NCBIfam" id="TIGR01258">
    <property type="entry name" value="pgm_1"/>
    <property type="match status" value="1"/>
</dbReference>
<dbReference type="NCBIfam" id="NF010713">
    <property type="entry name" value="PRK14115.1"/>
    <property type="match status" value="1"/>
</dbReference>
<dbReference type="NCBIfam" id="NF010718">
    <property type="entry name" value="PRK14120.1"/>
    <property type="match status" value="1"/>
</dbReference>
<dbReference type="PANTHER" id="PTHR11931">
    <property type="entry name" value="PHOSPHOGLYCERATE MUTASE"/>
    <property type="match status" value="1"/>
</dbReference>
<dbReference type="Pfam" id="PF00300">
    <property type="entry name" value="His_Phos_1"/>
    <property type="match status" value="2"/>
</dbReference>
<dbReference type="PIRSF" id="PIRSF000709">
    <property type="entry name" value="6PFK_2-Ptase"/>
    <property type="match status" value="1"/>
</dbReference>
<dbReference type="SMART" id="SM00855">
    <property type="entry name" value="PGAM"/>
    <property type="match status" value="1"/>
</dbReference>
<dbReference type="SUPFAM" id="SSF53254">
    <property type="entry name" value="Phosphoglycerate mutase-like"/>
    <property type="match status" value="1"/>
</dbReference>
<dbReference type="PROSITE" id="PS00175">
    <property type="entry name" value="PG_MUTASE"/>
    <property type="match status" value="1"/>
</dbReference>
<proteinExistence type="inferred from homology"/>
<protein>
    <recommendedName>
        <fullName evidence="1">2,3-bisphosphoglycerate-dependent phosphoglycerate mutase</fullName>
        <shortName evidence="1">BPG-dependent PGAM</shortName>
        <shortName evidence="1">PGAM</shortName>
        <shortName evidence="1">Phosphoglyceromutase</shortName>
        <shortName evidence="1">dPGM</shortName>
        <ecNumber evidence="1">5.4.2.11</ecNumber>
    </recommendedName>
</protein>
<reference key="1">
    <citation type="journal article" date="2007" name="J. Bacteriol.">
        <title>Genome sequence and analysis of the soil cellulolytic actinomycete Thermobifida fusca YX.</title>
        <authorList>
            <person name="Lykidis A."/>
            <person name="Mavromatis K."/>
            <person name="Ivanova N."/>
            <person name="Anderson I."/>
            <person name="Land M."/>
            <person name="DiBartolo G."/>
            <person name="Martinez M."/>
            <person name="Lapidus A."/>
            <person name="Lucas S."/>
            <person name="Copeland A."/>
            <person name="Richardson P."/>
            <person name="Wilson D.B."/>
            <person name="Kyrpides N."/>
        </authorList>
    </citation>
    <scope>NUCLEOTIDE SEQUENCE [LARGE SCALE GENOMIC DNA]</scope>
    <source>
        <strain>YX</strain>
    </source>
</reference>
<sequence length="247" mass="27680">MSTLVLLRHGESVWNAEGLFTGWVDVDLSPKGEEEARRGGRLLAEAGIRPDVVHTSLLKRAIRTANIALEEAGLHWIPVKRSWRLNERHYGALQGKNKAQTRAEFGDEQFMIWRRSYDTPPPPLAEDSEFSQHNDPRYATLPPELMPRTECLADVVRRMLPYWYDAIIPDLAAGRTVLVAAHGNSLRALVKHLDNIDDKSIAGLNIPTGIPLVYELNDDFTPRKTGGEYLDPEAAKEAIEAVKNQGK</sequence>
<evidence type="ECO:0000255" key="1">
    <source>
        <dbReference type="HAMAP-Rule" id="MF_01039"/>
    </source>
</evidence>